<reference key="1">
    <citation type="journal article" date="2006" name="PLoS Genet.">
        <title>Comparative genomics of emerging human ehrlichiosis agents.</title>
        <authorList>
            <person name="Dunning Hotopp J.C."/>
            <person name="Lin M."/>
            <person name="Madupu R."/>
            <person name="Crabtree J."/>
            <person name="Angiuoli S.V."/>
            <person name="Eisen J.A."/>
            <person name="Seshadri R."/>
            <person name="Ren Q."/>
            <person name="Wu M."/>
            <person name="Utterback T.R."/>
            <person name="Smith S."/>
            <person name="Lewis M."/>
            <person name="Khouri H."/>
            <person name="Zhang C."/>
            <person name="Niu H."/>
            <person name="Lin Q."/>
            <person name="Ohashi N."/>
            <person name="Zhi N."/>
            <person name="Nelson W.C."/>
            <person name="Brinkac L.M."/>
            <person name="Dodson R.J."/>
            <person name="Rosovitz M.J."/>
            <person name="Sundaram J.P."/>
            <person name="Daugherty S.C."/>
            <person name="Davidsen T."/>
            <person name="Durkin A.S."/>
            <person name="Gwinn M.L."/>
            <person name="Haft D.H."/>
            <person name="Selengut J.D."/>
            <person name="Sullivan S.A."/>
            <person name="Zafar N."/>
            <person name="Zhou L."/>
            <person name="Benahmed F."/>
            <person name="Forberger H."/>
            <person name="Halpin R."/>
            <person name="Mulligan S."/>
            <person name="Robinson J."/>
            <person name="White O."/>
            <person name="Rikihisa Y."/>
            <person name="Tettelin H."/>
        </authorList>
    </citation>
    <scope>NUCLEOTIDE SEQUENCE [LARGE SCALE GENOMIC DNA]</scope>
    <source>
        <strain>HZ</strain>
    </source>
</reference>
<reference key="2">
    <citation type="journal article" date="2010" name="Infect. Immun.">
        <title>Anaplasma phagocytophilum APH_1387 is expressed throughout bacterial intracellular development and localizes to the pathogen-occupied vacuolar membrane.</title>
        <authorList>
            <person name="Huang B."/>
            <person name="Troese M.J."/>
            <person name="Ye S."/>
            <person name="Sims J.T."/>
            <person name="Galloway N.L."/>
            <person name="Borjesson D.L."/>
            <person name="Carlyon J.A."/>
        </authorList>
    </citation>
    <scope>SUBCELLULAR LOCATION</scope>
    <scope>INDUCTION</scope>
    <scope>REPEAT</scope>
    <source>
        <strain>HZ</strain>
    </source>
</reference>
<reference key="3">
    <citation type="journal article" date="2015" name="Cell. Microbiol.">
        <title>The Anaplasma phagocytophilum effector AmpA hijacks host cell SUMOylation.</title>
        <authorList>
            <person name="Beyer A.R."/>
            <person name="Truchan H.K."/>
            <person name="May L.J."/>
            <person name="Walker N.J."/>
            <person name="Borjesson D.L."/>
            <person name="Carlyon J.A."/>
        </authorList>
    </citation>
    <scope>FUNCTION</scope>
    <scope>SUMOYLATION</scope>
    <scope>SUBCELLULAR LOCATION</scope>
</reference>
<protein>
    <recommendedName>
        <fullName evidence="5">SUMOylated effector protein AmpA</fullName>
    </recommendedName>
    <alternativeName>
        <fullName evidence="4">P100</fullName>
    </alternativeName>
</protein>
<comment type="function">
    <text evidence="3">Secreted effector that hijacks host cell SUMOylation during A.phagocytophilum infection and is important for the pathogen's intracellular survival.</text>
</comment>
<comment type="subcellular location">
    <subcellularLocation>
        <location evidence="2 3">Secreted</location>
    </subcellularLocation>
    <subcellularLocation>
        <location evidence="2">Host membrane</location>
        <topology evidence="6">Multi-pass membrane protein</topology>
    </subcellularLocation>
    <subcellularLocation>
        <location evidence="3">Host cytoplasm</location>
        <location evidence="3">Host cytosol</location>
    </subcellularLocation>
    <text evidence="2 3">Localizes to the A.phagocytophilum-occupied vacuolar membrane (AVM) (PubMed:20212090). Potentially traverses the AVM 3 or fewer times by means of the 3 bilobed hydrophobic alpha-helical domains that are predicted to be in each direct repeat (PubMed:20212090). Colocalizes with SUMO2/3 on the AVM and in the host cytosol throughout the infection cycle (PubMed:25308709). Only late during the infection cycle AmpA colocalizes with SUMO1, which terminally caps poly-SUMO2/3 chains (PubMed:25308709). Is probably not secreted via the type IV secretion system (T4SS) (PubMed:20212090).</text>
</comment>
<comment type="induction">
    <text evidence="2">Is induced within the initial hours of A.phagocytophilum infection and is strongly expressed during the bacterium's intracellular replication phase.</text>
</comment>
<comment type="PTM">
    <text evidence="3">Polysumoylated during infection on at least two lysine residues, in the N- and C-terminal section. SUMO2/3 modification of AmpA throughout the infection cycle is likely critical for bacterial intracellular survival, while terminal SUMO1 conjugation of AmpA may promote a late-stage infection cycle event. Only a small portion of the available AmpA pool is actually SUMOylated at any given time.</text>
</comment>
<comment type="miscellaneous">
    <text evidence="3">Pharmacologically inhibiting sumoylation in infected cells significantly reduces the bacterial load.</text>
</comment>
<organism>
    <name type="scientific">Anaplasma phagocytophilum (strain HZ)</name>
    <dbReference type="NCBI Taxonomy" id="212042"/>
    <lineage>
        <taxon>Bacteria</taxon>
        <taxon>Pseudomonadati</taxon>
        <taxon>Pseudomonadota</taxon>
        <taxon>Alphaproteobacteria</taxon>
        <taxon>Rickettsiales</taxon>
        <taxon>Anaplasmataceae</taxon>
        <taxon>Anaplasma</taxon>
        <taxon>phagocytophilum group</taxon>
    </lineage>
</organism>
<feature type="chain" id="PRO_0000436967" description="SUMOylated effector protein AmpA">
    <location>
        <begin position="1"/>
        <end position="578"/>
    </location>
</feature>
<feature type="repeat" description="1" evidence="6">
    <location>
        <begin position="180"/>
        <end position="272"/>
    </location>
</feature>
<feature type="repeat" description="2" evidence="6">
    <location>
        <begin position="304"/>
        <end position="425"/>
    </location>
</feature>
<feature type="repeat" description="3" evidence="6">
    <location>
        <begin position="428"/>
        <end position="557"/>
    </location>
</feature>
<feature type="region of interest" description="Disordered" evidence="1">
    <location>
        <begin position="144"/>
        <end position="169"/>
    </location>
</feature>
<feature type="region of interest" description="3 X approximate tandem repeats" evidence="6">
    <location>
        <begin position="180"/>
        <end position="557"/>
    </location>
</feature>
<feature type="region of interest" description="Disordered" evidence="1">
    <location>
        <begin position="516"/>
        <end position="578"/>
    </location>
</feature>
<sequence>MYGIDIELSDYRIGSETISSGDDGYYEGCACDKDASTNAYSYDKCRVVRGTWRPSELVLYVGDEHVACRDVASGMHHGNLPGKVYFIEAEAGRAATAEGGVYTTVVEALSLVQEEEGTGMYLINAPEKAVVRFFKIEKSAAEEPQTVDPSVVESATGSGVDTQEEQEIDQEAPAIEEVETEEQEVILEEGTLIDLEQPVAQVPVVAEAELPGVEAAEAIVPSLEENKLQEVVVAPEAQQLESAPEVSAPAQPESTVLGVAEGDLKSEVSVEANADVAQKEVISGQQEQEIAEALEGTEAPVEVKEETEVLLKEDTLIDLEQPVAQVPVVAEAELPGVEAAEAIVPSLEENKLQEVVVAPEAQQLESAPEVSAPAQPESTVLGVTEGDLKSEVSVEADAGMQQEAGISDQETQATEEVEKVEVSVETKTEEPEVILEEGTLIDLEQPVAQVPVVAEAELPGVEAAEAIVPSLEENKLQEVVVAPEAQQLESAPEVSAPVQPESTVLGVTEGDLKSEVSVEADAGMQQEAGISDQETQATEEVEKVEVSVEADAGMQQELVDVPTALPLKDPDDEDVLSY</sequence>
<evidence type="ECO:0000256" key="1">
    <source>
        <dbReference type="SAM" id="MobiDB-lite"/>
    </source>
</evidence>
<evidence type="ECO:0000269" key="2">
    <source>
    </source>
</evidence>
<evidence type="ECO:0000269" key="3">
    <source>
    </source>
</evidence>
<evidence type="ECO:0000303" key="4">
    <source>
    </source>
</evidence>
<evidence type="ECO:0000303" key="5">
    <source>
    </source>
</evidence>
<evidence type="ECO:0000305" key="6">
    <source>
    </source>
</evidence>
<evidence type="ECO:0000312" key="7">
    <source>
        <dbReference type="EMBL" id="ABD44281.1"/>
    </source>
</evidence>
<gene>
    <name evidence="5" type="primary">ampA</name>
    <name evidence="7" type="ordered locus">APH_1387</name>
</gene>
<proteinExistence type="evidence at protein level"/>
<name>AMPA_ANAPZ</name>
<accession>Q2GIB5</accession>
<keyword id="KW-1035">Host cytoplasm</keyword>
<keyword id="KW-1043">Host membrane</keyword>
<keyword id="KW-0472">Membrane</keyword>
<keyword id="KW-0677">Repeat</keyword>
<keyword id="KW-0964">Secreted</keyword>
<keyword id="KW-0812">Transmembrane</keyword>
<keyword id="KW-1133">Transmembrane helix</keyword>
<keyword id="KW-0832">Ubl conjugation</keyword>
<dbReference type="EMBL" id="CP000235">
    <property type="protein sequence ID" value="ABD44281.1"/>
    <property type="molecule type" value="Genomic_DNA"/>
</dbReference>
<dbReference type="RefSeq" id="WP_011451392.1">
    <property type="nucleotide sequence ID" value="NC_007797.1"/>
</dbReference>
<dbReference type="STRING" id="212042.APH_1387"/>
<dbReference type="PaxDb" id="212042-APH_1387"/>
<dbReference type="EnsemblBacteria" id="ABD44281">
    <property type="protein sequence ID" value="ABD44281"/>
    <property type="gene ID" value="APH_1387"/>
</dbReference>
<dbReference type="KEGG" id="aph:APH_1387"/>
<dbReference type="HOGENOM" id="CLU_471483_0_0_5"/>
<dbReference type="Proteomes" id="UP000001943">
    <property type="component" value="Chromosome"/>
</dbReference>
<dbReference type="GO" id="GO:0005576">
    <property type="term" value="C:extracellular region"/>
    <property type="evidence" value="ECO:0007669"/>
    <property type="project" value="UniProtKB-SubCell"/>
</dbReference>
<dbReference type="GO" id="GO:0044162">
    <property type="term" value="C:host cell cytoplasmic vesicle membrane"/>
    <property type="evidence" value="ECO:0000314"/>
    <property type="project" value="UniProtKB"/>
</dbReference>
<dbReference type="GO" id="GO:0044164">
    <property type="term" value="C:host cell cytosol"/>
    <property type="evidence" value="ECO:0000314"/>
    <property type="project" value="UniProtKB"/>
</dbReference>
<dbReference type="GO" id="GO:0016020">
    <property type="term" value="C:membrane"/>
    <property type="evidence" value="ECO:0007669"/>
    <property type="project" value="UniProtKB-KW"/>
</dbReference>